<feature type="chain" id="PRO_0000240478" description="Ankyrin repeat domain-containing protein 1">
    <location>
        <begin position="1"/>
        <end position="319"/>
    </location>
</feature>
<feature type="repeat" description="ANK 1">
    <location>
        <begin position="152"/>
        <end position="181"/>
    </location>
</feature>
<feature type="repeat" description="ANK 2">
    <location>
        <begin position="185"/>
        <end position="214"/>
    </location>
</feature>
<feature type="repeat" description="ANK 3">
    <location>
        <begin position="218"/>
        <end position="247"/>
    </location>
</feature>
<feature type="repeat" description="ANK 4">
    <location>
        <begin position="251"/>
        <end position="280"/>
    </location>
</feature>
<feature type="repeat" description="ANK 5">
    <location>
        <begin position="284"/>
        <end position="315"/>
    </location>
</feature>
<feature type="coiled-coil region" evidence="2">
    <location>
        <begin position="61"/>
        <end position="89"/>
    </location>
</feature>
<gene>
    <name type="primary">ANKRD1</name>
</gene>
<protein>
    <recommendedName>
        <fullName>Ankyrin repeat domain-containing protein 1</fullName>
    </recommendedName>
</protein>
<accession>Q3ZBX7</accession>
<name>ANKR1_BOVIN</name>
<dbReference type="EMBL" id="BC103045">
    <property type="protein sequence ID" value="AAI03046.1"/>
    <property type="molecule type" value="mRNA"/>
</dbReference>
<dbReference type="RefSeq" id="NP_001029550.1">
    <property type="nucleotide sequence ID" value="NM_001034378.2"/>
</dbReference>
<dbReference type="SMR" id="Q3ZBX7"/>
<dbReference type="FunCoup" id="Q3ZBX7">
    <property type="interactions" value="54"/>
</dbReference>
<dbReference type="STRING" id="9913.ENSBTAP00000015584"/>
<dbReference type="PaxDb" id="9913-ENSBTAP00000015584"/>
<dbReference type="Ensembl" id="ENSBTAT00000015584.5">
    <property type="protein sequence ID" value="ENSBTAP00000015584.3"/>
    <property type="gene ID" value="ENSBTAG00000011734.5"/>
</dbReference>
<dbReference type="GeneID" id="510376"/>
<dbReference type="KEGG" id="bta:510376"/>
<dbReference type="CTD" id="27063"/>
<dbReference type="VEuPathDB" id="HostDB:ENSBTAG00000011734"/>
<dbReference type="VGNC" id="VGNC:25908">
    <property type="gene designation" value="ANKRD1"/>
</dbReference>
<dbReference type="eggNOG" id="KOG0504">
    <property type="taxonomic scope" value="Eukaryota"/>
</dbReference>
<dbReference type="GeneTree" id="ENSGT00940000153956"/>
<dbReference type="HOGENOM" id="CLU_000134_11_1_1"/>
<dbReference type="InParanoid" id="Q3ZBX7"/>
<dbReference type="OMA" id="QYDCGEH"/>
<dbReference type="OrthoDB" id="426293at2759"/>
<dbReference type="TreeFam" id="TF331650"/>
<dbReference type="Proteomes" id="UP000009136">
    <property type="component" value="Chromosome 26"/>
</dbReference>
<dbReference type="Bgee" id="ENSBTAG00000011734">
    <property type="expression patterns" value="Expressed in cardiac ventricle and 79 other cell types or tissues"/>
</dbReference>
<dbReference type="GO" id="GO:0005829">
    <property type="term" value="C:cytosol"/>
    <property type="evidence" value="ECO:0007669"/>
    <property type="project" value="Ensembl"/>
</dbReference>
<dbReference type="GO" id="GO:0001650">
    <property type="term" value="C:fibrillar center"/>
    <property type="evidence" value="ECO:0007669"/>
    <property type="project" value="Ensembl"/>
</dbReference>
<dbReference type="GO" id="GO:0031674">
    <property type="term" value="C:I band"/>
    <property type="evidence" value="ECO:0007669"/>
    <property type="project" value="Ensembl"/>
</dbReference>
<dbReference type="GO" id="GO:0005654">
    <property type="term" value="C:nucleoplasm"/>
    <property type="evidence" value="ECO:0007669"/>
    <property type="project" value="Ensembl"/>
</dbReference>
<dbReference type="GO" id="GO:0005634">
    <property type="term" value="C:nucleus"/>
    <property type="evidence" value="ECO:0000318"/>
    <property type="project" value="GO_Central"/>
</dbReference>
<dbReference type="GO" id="GO:0005667">
    <property type="term" value="C:transcription regulator complex"/>
    <property type="evidence" value="ECO:0007669"/>
    <property type="project" value="Ensembl"/>
</dbReference>
<dbReference type="GO" id="GO:0003677">
    <property type="term" value="F:DNA binding"/>
    <property type="evidence" value="ECO:0007669"/>
    <property type="project" value="Ensembl"/>
</dbReference>
<dbReference type="GO" id="GO:0042826">
    <property type="term" value="F:histone deacetylase binding"/>
    <property type="evidence" value="ECO:0007669"/>
    <property type="project" value="Ensembl"/>
</dbReference>
<dbReference type="GO" id="GO:0002039">
    <property type="term" value="F:p53 binding"/>
    <property type="evidence" value="ECO:0007669"/>
    <property type="project" value="Ensembl"/>
</dbReference>
<dbReference type="GO" id="GO:0070412">
    <property type="term" value="F:R-SMAD binding"/>
    <property type="evidence" value="ECO:0007669"/>
    <property type="project" value="Ensembl"/>
</dbReference>
<dbReference type="GO" id="GO:0061629">
    <property type="term" value="F:RNA polymerase II-specific DNA-binding transcription factor binding"/>
    <property type="evidence" value="ECO:0000318"/>
    <property type="project" value="GO_Central"/>
</dbReference>
<dbReference type="GO" id="GO:0031432">
    <property type="term" value="F:titin binding"/>
    <property type="evidence" value="ECO:0007669"/>
    <property type="project" value="Ensembl"/>
</dbReference>
<dbReference type="GO" id="GO:0003713">
    <property type="term" value="F:transcription coactivator activity"/>
    <property type="evidence" value="ECO:0007669"/>
    <property type="project" value="Ensembl"/>
</dbReference>
<dbReference type="GO" id="GO:0003714">
    <property type="term" value="F:transcription corepressor activity"/>
    <property type="evidence" value="ECO:0007669"/>
    <property type="project" value="Ensembl"/>
</dbReference>
<dbReference type="GO" id="GO:0055008">
    <property type="term" value="P:cardiac muscle tissue morphogenesis"/>
    <property type="evidence" value="ECO:0007669"/>
    <property type="project" value="Ensembl"/>
</dbReference>
<dbReference type="GO" id="GO:0071347">
    <property type="term" value="P:cellular response to interleukin-1"/>
    <property type="evidence" value="ECO:0007669"/>
    <property type="project" value="Ensembl"/>
</dbReference>
<dbReference type="GO" id="GO:0071222">
    <property type="term" value="P:cellular response to lipopolysaccharide"/>
    <property type="evidence" value="ECO:0007669"/>
    <property type="project" value="Ensembl"/>
</dbReference>
<dbReference type="GO" id="GO:0071260">
    <property type="term" value="P:cellular response to mechanical stimulus"/>
    <property type="evidence" value="ECO:0007669"/>
    <property type="project" value="Ensembl"/>
</dbReference>
<dbReference type="GO" id="GO:0071560">
    <property type="term" value="P:cellular response to transforming growth factor beta stimulus"/>
    <property type="evidence" value="ECO:0007669"/>
    <property type="project" value="Ensembl"/>
</dbReference>
<dbReference type="GO" id="GO:0071356">
    <property type="term" value="P:cellular response to tumor necrosis factor"/>
    <property type="evidence" value="ECO:0007669"/>
    <property type="project" value="Ensembl"/>
</dbReference>
<dbReference type="GO" id="GO:0071466">
    <property type="term" value="P:cellular response to xenobiotic stimulus"/>
    <property type="evidence" value="ECO:0007669"/>
    <property type="project" value="Ensembl"/>
</dbReference>
<dbReference type="GO" id="GO:2000279">
    <property type="term" value="P:negative regulation of DNA biosynthetic process"/>
    <property type="evidence" value="ECO:0007669"/>
    <property type="project" value="Ensembl"/>
</dbReference>
<dbReference type="GO" id="GO:0141212">
    <property type="term" value="P:phospholipase C/protein kinase C signal transduction"/>
    <property type="evidence" value="ECO:0007669"/>
    <property type="project" value="Ensembl"/>
</dbReference>
<dbReference type="GO" id="GO:0043065">
    <property type="term" value="P:positive regulation of apoptotic process"/>
    <property type="evidence" value="ECO:0007669"/>
    <property type="project" value="Ensembl"/>
</dbReference>
<dbReference type="GO" id="GO:0043517">
    <property type="term" value="P:positive regulation of DNA damage response, signal transduction by p53 class mediator"/>
    <property type="evidence" value="ECO:0007669"/>
    <property type="project" value="Ensembl"/>
</dbReference>
<dbReference type="GO" id="GO:0050714">
    <property type="term" value="P:positive regulation of protein secretion"/>
    <property type="evidence" value="ECO:0007669"/>
    <property type="project" value="Ensembl"/>
</dbReference>
<dbReference type="GO" id="GO:0006357">
    <property type="term" value="P:regulation of transcription by RNA polymerase II"/>
    <property type="evidence" value="ECO:0000318"/>
    <property type="project" value="GO_Central"/>
</dbReference>
<dbReference type="GO" id="GO:0035994">
    <property type="term" value="P:response to muscle stretch"/>
    <property type="evidence" value="ECO:0007669"/>
    <property type="project" value="Ensembl"/>
</dbReference>
<dbReference type="GO" id="GO:0035914">
    <property type="term" value="P:skeletal muscle cell differentiation"/>
    <property type="evidence" value="ECO:0007669"/>
    <property type="project" value="Ensembl"/>
</dbReference>
<dbReference type="FunFam" id="1.25.40.20:FF:000111">
    <property type="entry name" value="Ankyrin repeat domain-containing protein 1"/>
    <property type="match status" value="1"/>
</dbReference>
<dbReference type="FunFam" id="1.25.40.20:FF:000369">
    <property type="entry name" value="Ankyrin repeat domain-containing protein 1"/>
    <property type="match status" value="1"/>
</dbReference>
<dbReference type="Gene3D" id="1.25.40.20">
    <property type="entry name" value="Ankyrin repeat-containing domain"/>
    <property type="match status" value="2"/>
</dbReference>
<dbReference type="InterPro" id="IPR002110">
    <property type="entry name" value="Ankyrin_rpt"/>
</dbReference>
<dbReference type="InterPro" id="IPR036770">
    <property type="entry name" value="Ankyrin_rpt-contain_sf"/>
</dbReference>
<dbReference type="PANTHER" id="PTHR24126:SF7">
    <property type="entry name" value="ANKYRIN REPEAT DOMAIN-CONTAINING PROTEIN 1"/>
    <property type="match status" value="1"/>
</dbReference>
<dbReference type="PANTHER" id="PTHR24126">
    <property type="entry name" value="ANKYRIN REPEAT, PH AND SEC7 DOMAIN CONTAINING PROTEIN SECG-RELATED"/>
    <property type="match status" value="1"/>
</dbReference>
<dbReference type="Pfam" id="PF12796">
    <property type="entry name" value="Ank_2"/>
    <property type="match status" value="2"/>
</dbReference>
<dbReference type="PRINTS" id="PR01415">
    <property type="entry name" value="ANKYRIN"/>
</dbReference>
<dbReference type="SMART" id="SM00248">
    <property type="entry name" value="ANK"/>
    <property type="match status" value="4"/>
</dbReference>
<dbReference type="SUPFAM" id="SSF48403">
    <property type="entry name" value="Ankyrin repeat"/>
    <property type="match status" value="1"/>
</dbReference>
<dbReference type="PROSITE" id="PS50297">
    <property type="entry name" value="ANK_REP_REGION"/>
    <property type="match status" value="1"/>
</dbReference>
<dbReference type="PROSITE" id="PS50088">
    <property type="entry name" value="ANK_REPEAT"/>
    <property type="match status" value="4"/>
</dbReference>
<organism>
    <name type="scientific">Bos taurus</name>
    <name type="common">Bovine</name>
    <dbReference type="NCBI Taxonomy" id="9913"/>
    <lineage>
        <taxon>Eukaryota</taxon>
        <taxon>Metazoa</taxon>
        <taxon>Chordata</taxon>
        <taxon>Craniata</taxon>
        <taxon>Vertebrata</taxon>
        <taxon>Euteleostomi</taxon>
        <taxon>Mammalia</taxon>
        <taxon>Eutheria</taxon>
        <taxon>Laurasiatheria</taxon>
        <taxon>Artiodactyla</taxon>
        <taxon>Ruminantia</taxon>
        <taxon>Pecora</taxon>
        <taxon>Bovidae</taxon>
        <taxon>Bovinae</taxon>
        <taxon>Bos</taxon>
    </lineage>
</organism>
<sequence length="319" mass="36165">MMVLKVEELVTGKKKGNGDAGEFLPEDFRDGEYEAAVTLEKQEDLKTLPVHFVSLGEQQWKTEKQREAELKKKKLEQRSKLENLEDLEIIIQLKKRKKYKKTKVPVVKEPEPEIVTEPVDVPMFLKAALENKLPVIEKFLSDKNNPDVCDEYKRTALHRACLEGHLAIVEKLIEAGAQIEFRDMLESTAIHWASRGGSLDVLKLLLNKGAKISARDKLLSTPLHVAVRTGHYECAEHLIACEADLNAKDREGDTPLHDAVRLNRYKMIRLLITYGADLNVKNCAGKTPMDLVLHWQNGTKAIFDSLKENSYKASRIAAF</sequence>
<evidence type="ECO:0000250" key="1"/>
<evidence type="ECO:0000255" key="2"/>
<keyword id="KW-0040">ANK repeat</keyword>
<keyword id="KW-0175">Coiled coil</keyword>
<keyword id="KW-0539">Nucleus</keyword>
<keyword id="KW-1185">Reference proteome</keyword>
<keyword id="KW-0677">Repeat</keyword>
<comment type="function">
    <text evidence="1">May play an important role in endothelial cell activation. May act as a nuclear transcription factor that negatively regulates the expression of cardiac genes (By similarity).</text>
</comment>
<comment type="subunit">
    <text evidence="1">Interacts with TTN/titin and YBX1.</text>
</comment>
<comment type="subcellular location">
    <subcellularLocation>
        <location evidence="1">Nucleus</location>
    </subcellularLocation>
</comment>
<reference key="1">
    <citation type="submission" date="2005-08" db="EMBL/GenBank/DDBJ databases">
        <authorList>
            <consortium name="NIH - Mammalian Gene Collection (MGC) project"/>
        </authorList>
    </citation>
    <scope>NUCLEOTIDE SEQUENCE [LARGE SCALE MRNA]</scope>
    <source>
        <strain>Hereford</strain>
        <tissue>Heart ventricle</tissue>
    </source>
</reference>
<proteinExistence type="evidence at transcript level"/>